<reference key="1">
    <citation type="submission" date="2007-08" db="EMBL/GenBank/DDBJ databases">
        <title>Complete sequence of Thermotoga lettingae TMO.</title>
        <authorList>
            <consortium name="US DOE Joint Genome Institute"/>
            <person name="Copeland A."/>
            <person name="Lucas S."/>
            <person name="Lapidus A."/>
            <person name="Barry K."/>
            <person name="Glavina del Rio T."/>
            <person name="Dalin E."/>
            <person name="Tice H."/>
            <person name="Pitluck S."/>
            <person name="Foster B."/>
            <person name="Bruce D."/>
            <person name="Schmutz J."/>
            <person name="Larimer F."/>
            <person name="Land M."/>
            <person name="Hauser L."/>
            <person name="Kyrpides N."/>
            <person name="Mikhailova N."/>
            <person name="Nelson K."/>
            <person name="Gogarten J.P."/>
            <person name="Noll K."/>
            <person name="Richardson P."/>
        </authorList>
    </citation>
    <scope>NUCLEOTIDE SEQUENCE [LARGE SCALE GENOMIC DNA]</scope>
    <source>
        <strain>ATCC BAA-301 / DSM 14385 / NBRC 107922 / TMO</strain>
    </source>
</reference>
<name>EFP_PSELT</name>
<sequence>MVEVGDLKKGMVIMVNGEPHRVVDVSKHHMAMGRGIIRTKLKSVVTGFVKDVNFSSGERVEEANLSFRQAQFLYSDGAHYHFMALDDYEQYILSEEDLQDAKWYLIENLELSLVFLEDKPIGVQLPNVVTLKVVETEPSFKGDTVSGGGKPAVLETGLKINVPFFVETGEFIKVDTRTGEYVERA</sequence>
<accession>A8F7D2</accession>
<protein>
    <recommendedName>
        <fullName evidence="1">Elongation factor P</fullName>
        <shortName evidence="1">EF-P</shortName>
    </recommendedName>
</protein>
<gene>
    <name evidence="1" type="primary">efp</name>
    <name type="ordered locus">Tlet_1510</name>
</gene>
<evidence type="ECO:0000255" key="1">
    <source>
        <dbReference type="HAMAP-Rule" id="MF_00141"/>
    </source>
</evidence>
<feature type="chain" id="PRO_1000057928" description="Elongation factor P">
    <location>
        <begin position="1"/>
        <end position="185"/>
    </location>
</feature>
<organism>
    <name type="scientific">Pseudothermotoga lettingae (strain ATCC BAA-301 / DSM 14385 / NBRC 107922 / TMO)</name>
    <name type="common">Thermotoga lettingae</name>
    <dbReference type="NCBI Taxonomy" id="416591"/>
    <lineage>
        <taxon>Bacteria</taxon>
        <taxon>Thermotogati</taxon>
        <taxon>Thermotogota</taxon>
        <taxon>Thermotogae</taxon>
        <taxon>Thermotogales</taxon>
        <taxon>Thermotogaceae</taxon>
        <taxon>Pseudothermotoga</taxon>
    </lineage>
</organism>
<comment type="function">
    <text evidence="1">Involved in peptide bond synthesis. Stimulates efficient translation and peptide-bond synthesis on native or reconstituted 70S ribosomes in vitro. Probably functions indirectly by altering the affinity of the ribosome for aminoacyl-tRNA, thus increasing their reactivity as acceptors for peptidyl transferase.</text>
</comment>
<comment type="pathway">
    <text evidence="1">Protein biosynthesis; polypeptide chain elongation.</text>
</comment>
<comment type="subcellular location">
    <subcellularLocation>
        <location evidence="1">Cytoplasm</location>
    </subcellularLocation>
</comment>
<comment type="similarity">
    <text evidence="1">Belongs to the elongation factor P family.</text>
</comment>
<dbReference type="EMBL" id="CP000812">
    <property type="protein sequence ID" value="ABV34066.1"/>
    <property type="molecule type" value="Genomic_DNA"/>
</dbReference>
<dbReference type="RefSeq" id="WP_012003542.1">
    <property type="nucleotide sequence ID" value="NZ_BSDV01000001.1"/>
</dbReference>
<dbReference type="SMR" id="A8F7D2"/>
<dbReference type="STRING" id="416591.Tlet_1510"/>
<dbReference type="KEGG" id="tle:Tlet_1510"/>
<dbReference type="eggNOG" id="COG0231">
    <property type="taxonomic scope" value="Bacteria"/>
</dbReference>
<dbReference type="HOGENOM" id="CLU_074944_0_1_0"/>
<dbReference type="OrthoDB" id="9801844at2"/>
<dbReference type="UniPathway" id="UPA00345"/>
<dbReference type="Proteomes" id="UP000002016">
    <property type="component" value="Chromosome"/>
</dbReference>
<dbReference type="GO" id="GO:0005737">
    <property type="term" value="C:cytoplasm"/>
    <property type="evidence" value="ECO:0007669"/>
    <property type="project" value="UniProtKB-SubCell"/>
</dbReference>
<dbReference type="GO" id="GO:0003746">
    <property type="term" value="F:translation elongation factor activity"/>
    <property type="evidence" value="ECO:0007669"/>
    <property type="project" value="UniProtKB-UniRule"/>
</dbReference>
<dbReference type="GO" id="GO:0043043">
    <property type="term" value="P:peptide biosynthetic process"/>
    <property type="evidence" value="ECO:0007669"/>
    <property type="project" value="InterPro"/>
</dbReference>
<dbReference type="CDD" id="cd04470">
    <property type="entry name" value="S1_EF-P_repeat_1"/>
    <property type="match status" value="1"/>
</dbReference>
<dbReference type="CDD" id="cd05794">
    <property type="entry name" value="S1_EF-P_repeat_2"/>
    <property type="match status" value="1"/>
</dbReference>
<dbReference type="FunFam" id="2.40.50.140:FF:000004">
    <property type="entry name" value="Elongation factor P"/>
    <property type="match status" value="1"/>
</dbReference>
<dbReference type="FunFam" id="2.40.50.140:FF:000009">
    <property type="entry name" value="Elongation factor P"/>
    <property type="match status" value="1"/>
</dbReference>
<dbReference type="Gene3D" id="2.30.30.30">
    <property type="match status" value="1"/>
</dbReference>
<dbReference type="Gene3D" id="2.40.50.140">
    <property type="entry name" value="Nucleic acid-binding proteins"/>
    <property type="match status" value="2"/>
</dbReference>
<dbReference type="HAMAP" id="MF_00141">
    <property type="entry name" value="EF_P"/>
    <property type="match status" value="1"/>
</dbReference>
<dbReference type="InterPro" id="IPR015365">
    <property type="entry name" value="Elong-fact-P_C"/>
</dbReference>
<dbReference type="InterPro" id="IPR012340">
    <property type="entry name" value="NA-bd_OB-fold"/>
</dbReference>
<dbReference type="InterPro" id="IPR014722">
    <property type="entry name" value="Rib_uL2_dom2"/>
</dbReference>
<dbReference type="InterPro" id="IPR020599">
    <property type="entry name" value="Transl_elong_fac_P/YeiP"/>
</dbReference>
<dbReference type="InterPro" id="IPR013185">
    <property type="entry name" value="Transl_elong_KOW-like"/>
</dbReference>
<dbReference type="InterPro" id="IPR001059">
    <property type="entry name" value="Transl_elong_P/YeiP_cen"/>
</dbReference>
<dbReference type="InterPro" id="IPR013852">
    <property type="entry name" value="Transl_elong_P/YeiP_CS"/>
</dbReference>
<dbReference type="InterPro" id="IPR011768">
    <property type="entry name" value="Transl_elongation_fac_P"/>
</dbReference>
<dbReference type="InterPro" id="IPR008991">
    <property type="entry name" value="Translation_prot_SH3-like_sf"/>
</dbReference>
<dbReference type="NCBIfam" id="TIGR00038">
    <property type="entry name" value="efp"/>
    <property type="match status" value="1"/>
</dbReference>
<dbReference type="NCBIfam" id="NF001810">
    <property type="entry name" value="PRK00529.1"/>
    <property type="match status" value="1"/>
</dbReference>
<dbReference type="PANTHER" id="PTHR30053">
    <property type="entry name" value="ELONGATION FACTOR P"/>
    <property type="match status" value="1"/>
</dbReference>
<dbReference type="PANTHER" id="PTHR30053:SF12">
    <property type="entry name" value="ELONGATION FACTOR P (EF-P) FAMILY PROTEIN"/>
    <property type="match status" value="1"/>
</dbReference>
<dbReference type="Pfam" id="PF01132">
    <property type="entry name" value="EFP"/>
    <property type="match status" value="1"/>
</dbReference>
<dbReference type="Pfam" id="PF08207">
    <property type="entry name" value="EFP_N"/>
    <property type="match status" value="1"/>
</dbReference>
<dbReference type="Pfam" id="PF09285">
    <property type="entry name" value="Elong-fact-P_C"/>
    <property type="match status" value="1"/>
</dbReference>
<dbReference type="PIRSF" id="PIRSF005901">
    <property type="entry name" value="EF-P"/>
    <property type="match status" value="1"/>
</dbReference>
<dbReference type="SMART" id="SM01185">
    <property type="entry name" value="EFP"/>
    <property type="match status" value="1"/>
</dbReference>
<dbReference type="SMART" id="SM00841">
    <property type="entry name" value="Elong-fact-P_C"/>
    <property type="match status" value="1"/>
</dbReference>
<dbReference type="SUPFAM" id="SSF50249">
    <property type="entry name" value="Nucleic acid-binding proteins"/>
    <property type="match status" value="2"/>
</dbReference>
<dbReference type="SUPFAM" id="SSF50104">
    <property type="entry name" value="Translation proteins SH3-like domain"/>
    <property type="match status" value="1"/>
</dbReference>
<dbReference type="PROSITE" id="PS01275">
    <property type="entry name" value="EFP"/>
    <property type="match status" value="1"/>
</dbReference>
<proteinExistence type="inferred from homology"/>
<keyword id="KW-0963">Cytoplasm</keyword>
<keyword id="KW-0251">Elongation factor</keyword>
<keyword id="KW-0648">Protein biosynthesis</keyword>
<keyword id="KW-1185">Reference proteome</keyword>